<gene>
    <name evidence="1" type="primary">glyA2</name>
    <name type="ordered locus">ECA4046</name>
</gene>
<organism>
    <name type="scientific">Pectobacterium atrosepticum (strain SCRI 1043 / ATCC BAA-672)</name>
    <name type="common">Erwinia carotovora subsp. atroseptica</name>
    <dbReference type="NCBI Taxonomy" id="218491"/>
    <lineage>
        <taxon>Bacteria</taxon>
        <taxon>Pseudomonadati</taxon>
        <taxon>Pseudomonadota</taxon>
        <taxon>Gammaproteobacteria</taxon>
        <taxon>Enterobacterales</taxon>
        <taxon>Pectobacteriaceae</taxon>
        <taxon>Pectobacterium</taxon>
    </lineage>
</organism>
<evidence type="ECO:0000255" key="1">
    <source>
        <dbReference type="HAMAP-Rule" id="MF_00051"/>
    </source>
</evidence>
<dbReference type="EC" id="2.1.2.1" evidence="1"/>
<dbReference type="EMBL" id="BX950851">
    <property type="protein sequence ID" value="CAG76943.1"/>
    <property type="molecule type" value="Genomic_DNA"/>
</dbReference>
<dbReference type="RefSeq" id="WP_011095522.1">
    <property type="nucleotide sequence ID" value="NC_004547.2"/>
</dbReference>
<dbReference type="SMR" id="Q6CZV5"/>
<dbReference type="STRING" id="218491.ECA4046"/>
<dbReference type="KEGG" id="eca:ECA4046"/>
<dbReference type="PATRIC" id="fig|218491.5.peg.4112"/>
<dbReference type="eggNOG" id="COG0112">
    <property type="taxonomic scope" value="Bacteria"/>
</dbReference>
<dbReference type="HOGENOM" id="CLU_022477_2_1_6"/>
<dbReference type="OrthoDB" id="9803846at2"/>
<dbReference type="UniPathway" id="UPA00193"/>
<dbReference type="UniPathway" id="UPA00288">
    <property type="reaction ID" value="UER01023"/>
</dbReference>
<dbReference type="Proteomes" id="UP000007966">
    <property type="component" value="Chromosome"/>
</dbReference>
<dbReference type="GO" id="GO:0005829">
    <property type="term" value="C:cytosol"/>
    <property type="evidence" value="ECO:0007669"/>
    <property type="project" value="TreeGrafter"/>
</dbReference>
<dbReference type="GO" id="GO:0004372">
    <property type="term" value="F:glycine hydroxymethyltransferase activity"/>
    <property type="evidence" value="ECO:0007669"/>
    <property type="project" value="UniProtKB-UniRule"/>
</dbReference>
<dbReference type="GO" id="GO:0030170">
    <property type="term" value="F:pyridoxal phosphate binding"/>
    <property type="evidence" value="ECO:0007669"/>
    <property type="project" value="UniProtKB-UniRule"/>
</dbReference>
<dbReference type="GO" id="GO:0019264">
    <property type="term" value="P:glycine biosynthetic process from serine"/>
    <property type="evidence" value="ECO:0007669"/>
    <property type="project" value="UniProtKB-UniRule"/>
</dbReference>
<dbReference type="GO" id="GO:0035999">
    <property type="term" value="P:tetrahydrofolate interconversion"/>
    <property type="evidence" value="ECO:0007669"/>
    <property type="project" value="UniProtKB-UniRule"/>
</dbReference>
<dbReference type="CDD" id="cd00378">
    <property type="entry name" value="SHMT"/>
    <property type="match status" value="1"/>
</dbReference>
<dbReference type="FunFam" id="3.40.640.10:FF:000001">
    <property type="entry name" value="Serine hydroxymethyltransferase"/>
    <property type="match status" value="1"/>
</dbReference>
<dbReference type="FunFam" id="3.90.1150.10:FF:000003">
    <property type="entry name" value="Serine hydroxymethyltransferase"/>
    <property type="match status" value="1"/>
</dbReference>
<dbReference type="Gene3D" id="3.90.1150.10">
    <property type="entry name" value="Aspartate Aminotransferase, domain 1"/>
    <property type="match status" value="1"/>
</dbReference>
<dbReference type="Gene3D" id="3.40.640.10">
    <property type="entry name" value="Type I PLP-dependent aspartate aminotransferase-like (Major domain)"/>
    <property type="match status" value="1"/>
</dbReference>
<dbReference type="HAMAP" id="MF_00051">
    <property type="entry name" value="SHMT"/>
    <property type="match status" value="1"/>
</dbReference>
<dbReference type="InterPro" id="IPR015424">
    <property type="entry name" value="PyrdxlP-dep_Trfase"/>
</dbReference>
<dbReference type="InterPro" id="IPR015421">
    <property type="entry name" value="PyrdxlP-dep_Trfase_major"/>
</dbReference>
<dbReference type="InterPro" id="IPR015422">
    <property type="entry name" value="PyrdxlP-dep_Trfase_small"/>
</dbReference>
<dbReference type="InterPro" id="IPR001085">
    <property type="entry name" value="Ser_HO-MeTrfase"/>
</dbReference>
<dbReference type="InterPro" id="IPR049943">
    <property type="entry name" value="Ser_HO-MeTrfase-like"/>
</dbReference>
<dbReference type="InterPro" id="IPR019798">
    <property type="entry name" value="Ser_HO-MeTrfase_PLP_BS"/>
</dbReference>
<dbReference type="InterPro" id="IPR039429">
    <property type="entry name" value="SHMT-like_dom"/>
</dbReference>
<dbReference type="NCBIfam" id="NF000586">
    <property type="entry name" value="PRK00011.1"/>
    <property type="match status" value="1"/>
</dbReference>
<dbReference type="PANTHER" id="PTHR11680">
    <property type="entry name" value="SERINE HYDROXYMETHYLTRANSFERASE"/>
    <property type="match status" value="1"/>
</dbReference>
<dbReference type="PANTHER" id="PTHR11680:SF50">
    <property type="entry name" value="SERINE HYDROXYMETHYLTRANSFERASE"/>
    <property type="match status" value="1"/>
</dbReference>
<dbReference type="Pfam" id="PF00464">
    <property type="entry name" value="SHMT"/>
    <property type="match status" value="1"/>
</dbReference>
<dbReference type="PIRSF" id="PIRSF000412">
    <property type="entry name" value="SHMT"/>
    <property type="match status" value="1"/>
</dbReference>
<dbReference type="SUPFAM" id="SSF53383">
    <property type="entry name" value="PLP-dependent transferases"/>
    <property type="match status" value="1"/>
</dbReference>
<dbReference type="PROSITE" id="PS00096">
    <property type="entry name" value="SHMT"/>
    <property type="match status" value="1"/>
</dbReference>
<protein>
    <recommendedName>
        <fullName evidence="1">Serine hydroxymethyltransferase 2</fullName>
        <shortName evidence="1">SHMT 2</shortName>
        <shortName evidence="1">Serine methylase 2</shortName>
        <ecNumber evidence="1">2.1.2.1</ecNumber>
    </recommendedName>
</protein>
<keyword id="KW-0028">Amino-acid biosynthesis</keyword>
<keyword id="KW-0963">Cytoplasm</keyword>
<keyword id="KW-0554">One-carbon metabolism</keyword>
<keyword id="KW-0663">Pyridoxal phosphate</keyword>
<keyword id="KW-1185">Reference proteome</keyword>
<keyword id="KW-0808">Transferase</keyword>
<comment type="function">
    <text evidence="1">Catalyzes the reversible interconversion of serine and glycine with tetrahydrofolate (THF) serving as the one-carbon carrier. This reaction serves as the major source of one-carbon groups required for the biosynthesis of purines, thymidylate, methionine, and other important biomolecules. Also exhibits THF-independent aldolase activity toward beta-hydroxyamino acids, producing glycine and aldehydes, via a retro-aldol mechanism.</text>
</comment>
<comment type="catalytic activity">
    <reaction evidence="1">
        <text>(6R)-5,10-methylene-5,6,7,8-tetrahydrofolate + glycine + H2O = (6S)-5,6,7,8-tetrahydrofolate + L-serine</text>
        <dbReference type="Rhea" id="RHEA:15481"/>
        <dbReference type="ChEBI" id="CHEBI:15377"/>
        <dbReference type="ChEBI" id="CHEBI:15636"/>
        <dbReference type="ChEBI" id="CHEBI:33384"/>
        <dbReference type="ChEBI" id="CHEBI:57305"/>
        <dbReference type="ChEBI" id="CHEBI:57453"/>
        <dbReference type="EC" id="2.1.2.1"/>
    </reaction>
</comment>
<comment type="cofactor">
    <cofactor evidence="1">
        <name>pyridoxal 5'-phosphate</name>
        <dbReference type="ChEBI" id="CHEBI:597326"/>
    </cofactor>
</comment>
<comment type="pathway">
    <text evidence="1">One-carbon metabolism; tetrahydrofolate interconversion.</text>
</comment>
<comment type="pathway">
    <text evidence="1">Amino-acid biosynthesis; glycine biosynthesis; glycine from L-serine: step 1/1.</text>
</comment>
<comment type="subunit">
    <text evidence="1">Homodimer.</text>
</comment>
<comment type="subcellular location">
    <subcellularLocation>
        <location evidence="1">Cytoplasm</location>
    </subcellularLocation>
</comment>
<comment type="similarity">
    <text evidence="1">Belongs to the SHMT family.</text>
</comment>
<sequence length="423" mass="46398">MYDTSLTLTEFDPELADAILHEEDRQETHVELIASENYASPLVMAIQNSVFTNKYAEGYLGKRYYSGCEYVDVAERLAIERAKVLFDCDYANVQPHAGAQANAAVFLALTNPGDTVMGMNLAQGGHLTHGNPSNFSGRHYKIVPYGLDSETGLIDYDEMERIALETRPKMLIGGFSAYSRHKDWARMRTIADKVGAIFWVDMAHVAGLVAAGEYPNPLPQAHVVTSTTHKTLRGPRGGIILAKGQSEDFYKKLNAAVFPGIQGGPLMHVIAAKAVAFKEALRPEFTVYQRQVVANARAMARIIQQRGYKIVSDGTDNHLLLIDLSAKPYTGKDADAALSDAYITTNKNSVPNDPRSPFVTSGLRIGTPAVTTRGFGVTECEQLAGWLCDVLDGLGAGNEELTVIRDRVREQVVALCHRYPVYQ</sequence>
<accession>Q6CZV5</accession>
<feature type="chain" id="PRO_0000113578" description="Serine hydroxymethyltransferase 2">
    <location>
        <begin position="1"/>
        <end position="423"/>
    </location>
</feature>
<feature type="binding site" evidence="1">
    <location>
        <position position="121"/>
    </location>
    <ligand>
        <name>(6S)-5,6,7,8-tetrahydrofolate</name>
        <dbReference type="ChEBI" id="CHEBI:57453"/>
    </ligand>
</feature>
<feature type="binding site" evidence="1">
    <location>
        <begin position="125"/>
        <end position="127"/>
    </location>
    <ligand>
        <name>(6S)-5,6,7,8-tetrahydrofolate</name>
        <dbReference type="ChEBI" id="CHEBI:57453"/>
    </ligand>
</feature>
<feature type="binding site" evidence="1">
    <location>
        <begin position="356"/>
        <end position="358"/>
    </location>
    <ligand>
        <name>(6S)-5,6,7,8-tetrahydrofolate</name>
        <dbReference type="ChEBI" id="CHEBI:57453"/>
    </ligand>
</feature>
<feature type="site" description="Plays an important role in substrate specificity" evidence="1">
    <location>
        <position position="229"/>
    </location>
</feature>
<feature type="modified residue" description="N6-(pyridoxal phosphate)lysine" evidence="1">
    <location>
        <position position="230"/>
    </location>
</feature>
<reference key="1">
    <citation type="journal article" date="2004" name="Proc. Natl. Acad. Sci. U.S.A.">
        <title>Genome sequence of the enterobacterial phytopathogen Erwinia carotovora subsp. atroseptica and characterization of virulence factors.</title>
        <authorList>
            <person name="Bell K.S."/>
            <person name="Sebaihia M."/>
            <person name="Pritchard L."/>
            <person name="Holden M.T.G."/>
            <person name="Hyman L.J."/>
            <person name="Holeva M.C."/>
            <person name="Thomson N.R."/>
            <person name="Bentley S.D."/>
            <person name="Churcher L.J.C."/>
            <person name="Mungall K."/>
            <person name="Atkin R."/>
            <person name="Bason N."/>
            <person name="Brooks K."/>
            <person name="Chillingworth T."/>
            <person name="Clark K."/>
            <person name="Doggett J."/>
            <person name="Fraser A."/>
            <person name="Hance Z."/>
            <person name="Hauser H."/>
            <person name="Jagels K."/>
            <person name="Moule S."/>
            <person name="Norbertczak H."/>
            <person name="Ormond D."/>
            <person name="Price C."/>
            <person name="Quail M.A."/>
            <person name="Sanders M."/>
            <person name="Walker D."/>
            <person name="Whitehead S."/>
            <person name="Salmond G.P.C."/>
            <person name="Birch P.R.J."/>
            <person name="Parkhill J."/>
            <person name="Toth I.K."/>
        </authorList>
    </citation>
    <scope>NUCLEOTIDE SEQUENCE [LARGE SCALE GENOMIC DNA]</scope>
    <source>
        <strain>SCRI 1043 / ATCC BAA-672</strain>
    </source>
</reference>
<proteinExistence type="inferred from homology"/>
<name>GLYA2_PECAS</name>